<protein>
    <recommendedName>
        <fullName evidence="1">Glucose-6-phosphate isomerase</fullName>
        <shortName evidence="1">GPI</shortName>
        <ecNumber evidence="1">5.3.1.9</ecNumber>
    </recommendedName>
    <alternativeName>
        <fullName evidence="1">Phosphoglucose isomerase</fullName>
        <shortName evidence="1">PGI</shortName>
    </alternativeName>
    <alternativeName>
        <fullName evidence="1">Phosphohexose isomerase</fullName>
        <shortName evidence="1">PHI</shortName>
    </alternativeName>
</protein>
<feature type="chain" id="PRO_0000180762" description="Glucose-6-phosphate isomerase">
    <location>
        <begin position="1"/>
        <end position="550"/>
    </location>
</feature>
<feature type="active site" description="Proton donor" evidence="1">
    <location>
        <position position="356"/>
    </location>
</feature>
<feature type="active site" evidence="1">
    <location>
        <position position="387"/>
    </location>
</feature>
<feature type="active site" evidence="1">
    <location>
        <position position="515"/>
    </location>
</feature>
<feature type="helix" evidence="3">
    <location>
        <begin position="7"/>
        <end position="9"/>
    </location>
</feature>
<feature type="helix" evidence="3">
    <location>
        <begin position="11"/>
        <end position="23"/>
    </location>
</feature>
<feature type="helix" evidence="3">
    <location>
        <begin position="28"/>
        <end position="33"/>
    </location>
</feature>
<feature type="helix" evidence="3">
    <location>
        <begin position="38"/>
        <end position="41"/>
    </location>
</feature>
<feature type="strand" evidence="3">
    <location>
        <begin position="43"/>
        <end position="46"/>
    </location>
</feature>
<feature type="turn" evidence="3">
    <location>
        <begin position="47"/>
        <end position="49"/>
    </location>
</feature>
<feature type="strand" evidence="3">
    <location>
        <begin position="50"/>
        <end position="53"/>
    </location>
</feature>
<feature type="strand" evidence="3">
    <location>
        <begin position="56"/>
        <end position="58"/>
    </location>
</feature>
<feature type="helix" evidence="3">
    <location>
        <begin position="61"/>
        <end position="73"/>
    </location>
</feature>
<feature type="helix" evidence="3">
    <location>
        <begin position="76"/>
        <end position="85"/>
    </location>
</feature>
<feature type="turn" evidence="3">
    <location>
        <begin position="91"/>
        <end position="94"/>
    </location>
</feature>
<feature type="helix" evidence="3">
    <location>
        <begin position="99"/>
        <end position="102"/>
    </location>
</feature>
<feature type="strand" evidence="3">
    <location>
        <begin position="115"/>
        <end position="117"/>
    </location>
</feature>
<feature type="helix" evidence="3">
    <location>
        <begin position="118"/>
        <end position="137"/>
    </location>
</feature>
<feature type="strand" evidence="3">
    <location>
        <begin position="150"/>
        <end position="154"/>
    </location>
</feature>
<feature type="helix" evidence="3">
    <location>
        <begin position="157"/>
        <end position="159"/>
    </location>
</feature>
<feature type="helix" evidence="3">
    <location>
        <begin position="161"/>
        <end position="169"/>
    </location>
</feature>
<feature type="helix" evidence="3">
    <location>
        <begin position="171"/>
        <end position="173"/>
    </location>
</feature>
<feature type="strand" evidence="3">
    <location>
        <begin position="178"/>
        <end position="182"/>
    </location>
</feature>
<feature type="helix" evidence="3">
    <location>
        <begin position="187"/>
        <end position="194"/>
    </location>
</feature>
<feature type="helix" evidence="3">
    <location>
        <begin position="199"/>
        <end position="201"/>
    </location>
</feature>
<feature type="strand" evidence="3">
    <location>
        <begin position="202"/>
        <end position="207"/>
    </location>
</feature>
<feature type="strand" evidence="3">
    <location>
        <begin position="209"/>
        <end position="211"/>
    </location>
</feature>
<feature type="helix" evidence="3">
    <location>
        <begin position="214"/>
        <end position="231"/>
    </location>
</feature>
<feature type="helix" evidence="3">
    <location>
        <begin position="234"/>
        <end position="239"/>
    </location>
</feature>
<feature type="strand" evidence="3">
    <location>
        <begin position="241"/>
        <end position="246"/>
    </location>
</feature>
<feature type="helix" evidence="3">
    <location>
        <begin position="248"/>
        <end position="254"/>
    </location>
</feature>
<feature type="helix" evidence="3">
    <location>
        <begin position="258"/>
        <end position="260"/>
    </location>
</feature>
<feature type="helix" evidence="3">
    <location>
        <begin position="270"/>
        <end position="272"/>
    </location>
</feature>
<feature type="turn" evidence="3">
    <location>
        <begin position="274"/>
        <end position="276"/>
    </location>
</feature>
<feature type="helix" evidence="3">
    <location>
        <begin position="277"/>
        <end position="279"/>
    </location>
</feature>
<feature type="helix" evidence="3">
    <location>
        <begin position="280"/>
        <end position="286"/>
    </location>
</feature>
<feature type="helix" evidence="3">
    <location>
        <begin position="288"/>
        <end position="307"/>
    </location>
</feature>
<feature type="helix" evidence="3">
    <location>
        <begin position="310"/>
        <end position="312"/>
    </location>
</feature>
<feature type="helix" evidence="3">
    <location>
        <begin position="314"/>
        <end position="327"/>
    </location>
</feature>
<feature type="strand" evidence="3">
    <location>
        <begin position="333"/>
        <end position="339"/>
    </location>
</feature>
<feature type="helix" evidence="3">
    <location>
        <begin position="341"/>
        <end position="343"/>
    </location>
</feature>
<feature type="helix" evidence="3">
    <location>
        <begin position="346"/>
        <end position="358"/>
    </location>
</feature>
<feature type="strand" evidence="3">
    <location>
        <begin position="376"/>
        <end position="378"/>
    </location>
</feature>
<feature type="turn" evidence="3">
    <location>
        <begin position="382"/>
        <end position="385"/>
    </location>
</feature>
<feature type="helix" evidence="3">
    <location>
        <begin position="386"/>
        <end position="395"/>
    </location>
</feature>
<feature type="strand" evidence="3">
    <location>
        <begin position="396"/>
        <end position="398"/>
    </location>
</feature>
<feature type="strand" evidence="3">
    <location>
        <begin position="402"/>
        <end position="409"/>
    </location>
</feature>
<feature type="helix" evidence="3">
    <location>
        <begin position="417"/>
        <end position="434"/>
    </location>
</feature>
<feature type="helix" evidence="3">
    <location>
        <begin position="438"/>
        <end position="447"/>
    </location>
</feature>
<feature type="helix" evidence="3">
    <location>
        <begin position="452"/>
        <end position="462"/>
    </location>
</feature>
<feature type="strand" evidence="3">
    <location>
        <begin position="470"/>
        <end position="476"/>
    </location>
</feature>
<feature type="helix" evidence="3">
    <location>
        <begin position="480"/>
        <end position="500"/>
    </location>
</feature>
<feature type="helix" evidence="3">
    <location>
        <begin position="509"/>
        <end position="511"/>
    </location>
</feature>
<feature type="helix" evidence="3">
    <location>
        <begin position="512"/>
        <end position="521"/>
    </location>
</feature>
<feature type="helix" evidence="3">
    <location>
        <begin position="522"/>
        <end position="525"/>
    </location>
</feature>
<feature type="strand" evidence="3">
    <location>
        <begin position="526"/>
        <end position="528"/>
    </location>
</feature>
<feature type="helix" evidence="3">
    <location>
        <begin position="536"/>
        <end position="549"/>
    </location>
</feature>
<accession>Q9KUY4</accession>
<keyword id="KW-0002">3D-structure</keyword>
<keyword id="KW-0963">Cytoplasm</keyword>
<keyword id="KW-0312">Gluconeogenesis</keyword>
<keyword id="KW-0324">Glycolysis</keyword>
<keyword id="KW-0413">Isomerase</keyword>
<keyword id="KW-1185">Reference proteome</keyword>
<sequence length="550" mass="60691">MLKNINPTQTQAWKALTAHFESAQDMDLKALFAQDSERFAKYSARFGQDILVDYSKNLVNAETMQHLFALAKETDLQSAITAMFKGEAINQTEDRAVLHTALRNRSNSPVLVNGEDVMPAVNAVLAKMKAFSERVIGGEWKGFTGKAITDVVNIGIGGSDLGPYMVTEALVPYKNHLTMHFVSNVDGTHMAETLKNVDPETTLFLVASKTFTTQETMTNAHTARDWFLKAAGDEAHVAKHFAALSTNGKAVAEFGIDTDNMFEFWDWVGGRYSLWSAIGLSIILSIGYDNFVELLAGAHEMDQHFVNTPFESNIPVILALIGIWYNNFHGAESEAILPYDQYLHRFAAYFQQGNMESNGKYVDRNGNPVTYQTGPIIWGEPGTNGQHAFYQLIHQGTKLIPCDFIAPAVSHNLVGDHHQKLMSNFFAQTEALAFGKSAQAVQAELEKAGKSAAEIAALVPFKVFEGNRPTNSILVKQITPRTLGNLIAMYEHKIFVQGVIWNIFSFDQWGVELGKQLANQILPELADSAAVTSHDSSTNGLINAFKAFRA</sequence>
<name>G6PI_VIBCH</name>
<evidence type="ECO:0000255" key="1">
    <source>
        <dbReference type="HAMAP-Rule" id="MF_00473"/>
    </source>
</evidence>
<evidence type="ECO:0000305" key="2"/>
<evidence type="ECO:0007829" key="3">
    <source>
        <dbReference type="PDB" id="3HJB"/>
    </source>
</evidence>
<organism>
    <name type="scientific">Vibrio cholerae serotype O1 (strain ATCC 39315 / El Tor Inaba N16961)</name>
    <dbReference type="NCBI Taxonomy" id="243277"/>
    <lineage>
        <taxon>Bacteria</taxon>
        <taxon>Pseudomonadati</taxon>
        <taxon>Pseudomonadota</taxon>
        <taxon>Gammaproteobacteria</taxon>
        <taxon>Vibrionales</taxon>
        <taxon>Vibrionaceae</taxon>
        <taxon>Vibrio</taxon>
    </lineage>
</organism>
<reference key="1">
    <citation type="journal article" date="2000" name="Nature">
        <title>DNA sequence of both chromosomes of the cholera pathogen Vibrio cholerae.</title>
        <authorList>
            <person name="Heidelberg J.F."/>
            <person name="Eisen J.A."/>
            <person name="Nelson W.C."/>
            <person name="Clayton R.A."/>
            <person name="Gwinn M.L."/>
            <person name="Dodson R.J."/>
            <person name="Haft D.H."/>
            <person name="Hickey E.K."/>
            <person name="Peterson J.D."/>
            <person name="Umayam L.A."/>
            <person name="Gill S.R."/>
            <person name="Nelson K.E."/>
            <person name="Read T.D."/>
            <person name="Tettelin H."/>
            <person name="Richardson D.L."/>
            <person name="Ermolaeva M.D."/>
            <person name="Vamathevan J.J."/>
            <person name="Bass S."/>
            <person name="Qin H."/>
            <person name="Dragoi I."/>
            <person name="Sellers P."/>
            <person name="McDonald L.A."/>
            <person name="Utterback T.R."/>
            <person name="Fleischmann R.D."/>
            <person name="Nierman W.C."/>
            <person name="White O."/>
            <person name="Salzberg S.L."/>
            <person name="Smith H.O."/>
            <person name="Colwell R.R."/>
            <person name="Mekalanos J.J."/>
            <person name="Venter J.C."/>
            <person name="Fraser C.M."/>
        </authorList>
    </citation>
    <scope>NUCLEOTIDE SEQUENCE [LARGE SCALE GENOMIC DNA]</scope>
    <source>
        <strain>ATCC 39315 / El Tor Inaba N16961</strain>
    </source>
</reference>
<comment type="function">
    <text evidence="1">Catalyzes the reversible isomerization of glucose-6-phosphate to fructose-6-phosphate.</text>
</comment>
<comment type="catalytic activity">
    <reaction evidence="1">
        <text>alpha-D-glucose 6-phosphate = beta-D-fructose 6-phosphate</text>
        <dbReference type="Rhea" id="RHEA:11816"/>
        <dbReference type="ChEBI" id="CHEBI:57634"/>
        <dbReference type="ChEBI" id="CHEBI:58225"/>
        <dbReference type="EC" id="5.3.1.9"/>
    </reaction>
</comment>
<comment type="pathway">
    <text evidence="1">Carbohydrate biosynthesis; gluconeogenesis.</text>
</comment>
<comment type="pathway">
    <text evidence="1">Carbohydrate degradation; glycolysis; D-glyceraldehyde 3-phosphate and glycerone phosphate from D-glucose: step 2/4.</text>
</comment>
<comment type="subcellular location">
    <subcellularLocation>
        <location evidence="1">Cytoplasm</location>
    </subcellularLocation>
</comment>
<comment type="similarity">
    <text evidence="1 2">Belongs to the GPI family.</text>
</comment>
<gene>
    <name evidence="1" type="primary">pgi</name>
    <name type="ordered locus">VC_0374</name>
</gene>
<proteinExistence type="evidence at protein level"/>
<dbReference type="EC" id="5.3.1.9" evidence="1"/>
<dbReference type="EMBL" id="AE003852">
    <property type="protein sequence ID" value="AAF93547.1"/>
    <property type="molecule type" value="Genomic_DNA"/>
</dbReference>
<dbReference type="PIR" id="B82330">
    <property type="entry name" value="B82330"/>
</dbReference>
<dbReference type="RefSeq" id="NP_230028.1">
    <property type="nucleotide sequence ID" value="NC_002505.1"/>
</dbReference>
<dbReference type="RefSeq" id="WP_000916643.1">
    <property type="nucleotide sequence ID" value="NZ_LT906614.1"/>
</dbReference>
<dbReference type="PDB" id="3HJB">
    <property type="method" value="X-ray"/>
    <property type="resolution" value="1.50 A"/>
    <property type="chains" value="A/B/C/D=1-550"/>
</dbReference>
<dbReference type="PDBsum" id="3HJB"/>
<dbReference type="SMR" id="Q9KUY4"/>
<dbReference type="STRING" id="243277.VC_0374"/>
<dbReference type="DNASU" id="2615017"/>
<dbReference type="EnsemblBacteria" id="AAF93547">
    <property type="protein sequence ID" value="AAF93547"/>
    <property type="gene ID" value="VC_0374"/>
</dbReference>
<dbReference type="KEGG" id="vch:VC_0374"/>
<dbReference type="PATRIC" id="fig|243277.26.peg.350"/>
<dbReference type="eggNOG" id="COG0166">
    <property type="taxonomic scope" value="Bacteria"/>
</dbReference>
<dbReference type="HOGENOM" id="CLU_017947_3_1_6"/>
<dbReference type="UniPathway" id="UPA00109">
    <property type="reaction ID" value="UER00181"/>
</dbReference>
<dbReference type="UniPathway" id="UPA00138"/>
<dbReference type="EvolutionaryTrace" id="Q9KUY4"/>
<dbReference type="Proteomes" id="UP000000584">
    <property type="component" value="Chromosome 1"/>
</dbReference>
<dbReference type="GO" id="GO:0005829">
    <property type="term" value="C:cytosol"/>
    <property type="evidence" value="ECO:0000318"/>
    <property type="project" value="GO_Central"/>
</dbReference>
<dbReference type="GO" id="GO:0097367">
    <property type="term" value="F:carbohydrate derivative binding"/>
    <property type="evidence" value="ECO:0007669"/>
    <property type="project" value="InterPro"/>
</dbReference>
<dbReference type="GO" id="GO:0004347">
    <property type="term" value="F:glucose-6-phosphate isomerase activity"/>
    <property type="evidence" value="ECO:0000318"/>
    <property type="project" value="GO_Central"/>
</dbReference>
<dbReference type="GO" id="GO:0048029">
    <property type="term" value="F:monosaccharide binding"/>
    <property type="evidence" value="ECO:0000318"/>
    <property type="project" value="GO_Central"/>
</dbReference>
<dbReference type="GO" id="GO:0006094">
    <property type="term" value="P:gluconeogenesis"/>
    <property type="evidence" value="ECO:0000318"/>
    <property type="project" value="GO_Central"/>
</dbReference>
<dbReference type="GO" id="GO:0051156">
    <property type="term" value="P:glucose 6-phosphate metabolic process"/>
    <property type="evidence" value="ECO:0000318"/>
    <property type="project" value="GO_Central"/>
</dbReference>
<dbReference type="GO" id="GO:0006096">
    <property type="term" value="P:glycolytic process"/>
    <property type="evidence" value="ECO:0000318"/>
    <property type="project" value="GO_Central"/>
</dbReference>
<dbReference type="CDD" id="cd05015">
    <property type="entry name" value="SIS_PGI_1"/>
    <property type="match status" value="1"/>
</dbReference>
<dbReference type="CDD" id="cd05016">
    <property type="entry name" value="SIS_PGI_2"/>
    <property type="match status" value="1"/>
</dbReference>
<dbReference type="FunFam" id="1.10.1390.10:FF:000001">
    <property type="entry name" value="Glucose-6-phosphate isomerase"/>
    <property type="match status" value="1"/>
</dbReference>
<dbReference type="FunFam" id="3.40.50.10490:FF:000004">
    <property type="entry name" value="Glucose-6-phosphate isomerase"/>
    <property type="match status" value="1"/>
</dbReference>
<dbReference type="Gene3D" id="1.10.1390.10">
    <property type="match status" value="1"/>
</dbReference>
<dbReference type="Gene3D" id="3.40.50.10490">
    <property type="entry name" value="Glucose-6-phosphate isomerase like protein, domain 1"/>
    <property type="match status" value="2"/>
</dbReference>
<dbReference type="HAMAP" id="MF_00473">
    <property type="entry name" value="G6P_isomerase"/>
    <property type="match status" value="1"/>
</dbReference>
<dbReference type="InterPro" id="IPR001672">
    <property type="entry name" value="G6P_Isomerase"/>
</dbReference>
<dbReference type="InterPro" id="IPR023096">
    <property type="entry name" value="G6P_Isomerase_C"/>
</dbReference>
<dbReference type="InterPro" id="IPR018189">
    <property type="entry name" value="Phosphoglucose_isomerase_CS"/>
</dbReference>
<dbReference type="InterPro" id="IPR046348">
    <property type="entry name" value="SIS_dom_sf"/>
</dbReference>
<dbReference type="InterPro" id="IPR035476">
    <property type="entry name" value="SIS_PGI_1"/>
</dbReference>
<dbReference type="InterPro" id="IPR035482">
    <property type="entry name" value="SIS_PGI_2"/>
</dbReference>
<dbReference type="NCBIfam" id="NF001211">
    <property type="entry name" value="PRK00179.1"/>
    <property type="match status" value="1"/>
</dbReference>
<dbReference type="PANTHER" id="PTHR11469">
    <property type="entry name" value="GLUCOSE-6-PHOSPHATE ISOMERASE"/>
    <property type="match status" value="1"/>
</dbReference>
<dbReference type="PANTHER" id="PTHR11469:SF1">
    <property type="entry name" value="GLUCOSE-6-PHOSPHATE ISOMERASE"/>
    <property type="match status" value="1"/>
</dbReference>
<dbReference type="Pfam" id="PF00342">
    <property type="entry name" value="PGI"/>
    <property type="match status" value="1"/>
</dbReference>
<dbReference type="PRINTS" id="PR00662">
    <property type="entry name" value="G6PISOMERASE"/>
</dbReference>
<dbReference type="SUPFAM" id="SSF53697">
    <property type="entry name" value="SIS domain"/>
    <property type="match status" value="1"/>
</dbReference>
<dbReference type="PROSITE" id="PS00765">
    <property type="entry name" value="P_GLUCOSE_ISOMERASE_1"/>
    <property type="match status" value="1"/>
</dbReference>
<dbReference type="PROSITE" id="PS00174">
    <property type="entry name" value="P_GLUCOSE_ISOMERASE_2"/>
    <property type="match status" value="1"/>
</dbReference>
<dbReference type="PROSITE" id="PS51463">
    <property type="entry name" value="P_GLUCOSE_ISOMERASE_3"/>
    <property type="match status" value="1"/>
</dbReference>